<gene>
    <name type="primary">hb</name>
</gene>
<reference key="1">
    <citation type="journal article" date="1997" name="Syst. Biol.">
        <title>Multiple sources of character information and the phylogeny of Hawaiian Drosophilids.</title>
        <authorList>
            <person name="Baker R.H."/>
            <person name="DeSalle R."/>
        </authorList>
    </citation>
    <scope>NUCLEOTIDE SEQUENCE [GENOMIC DNA]</scope>
</reference>
<dbReference type="EMBL" id="U93026">
    <property type="protein sequence ID" value="AAC03274.1"/>
    <property type="molecule type" value="Genomic_DNA"/>
</dbReference>
<dbReference type="EMBL" id="U93027">
    <property type="protein sequence ID" value="AAC03275.1"/>
    <property type="molecule type" value="Genomic_DNA"/>
</dbReference>
<dbReference type="GO" id="GO:0005634">
    <property type="term" value="C:nucleus"/>
    <property type="evidence" value="ECO:0007669"/>
    <property type="project" value="UniProtKB-SubCell"/>
</dbReference>
<dbReference type="GO" id="GO:0003677">
    <property type="term" value="F:DNA binding"/>
    <property type="evidence" value="ECO:0007669"/>
    <property type="project" value="UniProtKB-KW"/>
</dbReference>
<dbReference type="GO" id="GO:0008270">
    <property type="term" value="F:zinc ion binding"/>
    <property type="evidence" value="ECO:0007669"/>
    <property type="project" value="UniProtKB-KW"/>
</dbReference>
<dbReference type="GO" id="GO:0035282">
    <property type="term" value="P:segmentation"/>
    <property type="evidence" value="ECO:0007669"/>
    <property type="project" value="UniProtKB-KW"/>
</dbReference>
<proteinExistence type="inferred from homology"/>
<accession>O46262</accession>
<accession>O46263</accession>
<evidence type="ECO:0000250" key="1"/>
<evidence type="ECO:0000256" key="2">
    <source>
        <dbReference type="SAM" id="MobiDB-lite"/>
    </source>
</evidence>
<evidence type="ECO:0000305" key="3"/>
<name>HUNB_DRODA</name>
<protein>
    <recommendedName>
        <fullName>Protein hunchback</fullName>
    </recommendedName>
</protein>
<sequence>WYSSMFAANIKQEPISHHHHHHHAHHSHHAHDSNSNSNASSPHQSPLPSPNPPSHTNLQLEQYLKQQQQQQQQHQHQQQQQPMDTLCAAAMTPSPSNNDQNSLGWLVGLPNPMQTIMPANMRPSPTATTATAAAAAPTTTAAAIALQANDKLQALTPPMDVTPPKSPAKSQQSCAEPEKEHDLMSNSSEDMKYMA</sequence>
<keyword id="KW-0217">Developmental protein</keyword>
<keyword id="KW-0238">DNA-binding</keyword>
<keyword id="KW-0302">Gap protein</keyword>
<keyword id="KW-0479">Metal-binding</keyword>
<keyword id="KW-0539">Nucleus</keyword>
<keyword id="KW-0677">Repeat</keyword>
<keyword id="KW-0862">Zinc</keyword>
<keyword id="KW-0863">Zinc-finger</keyword>
<comment type="function">
    <text evidence="1">Gap class segmentation protein that controls development of head structures.</text>
</comment>
<comment type="subcellular location">
    <subcellularLocation>
        <location evidence="1">Nucleus</location>
    </subcellularLocation>
</comment>
<comment type="similarity">
    <text evidence="3">Belongs to the hunchback C2H2-type zinc-finger protein family.</text>
</comment>
<feature type="chain" id="PRO_0000046953" description="Protein hunchback">
    <location>
        <begin position="1" status="less than"/>
        <end position="195" status="greater than"/>
    </location>
</feature>
<feature type="region of interest" description="Disordered" evidence="2">
    <location>
        <begin position="16"/>
        <end position="57"/>
    </location>
</feature>
<feature type="region of interest" description="Disordered" evidence="2">
    <location>
        <begin position="64"/>
        <end position="83"/>
    </location>
</feature>
<feature type="region of interest" description="Disordered" evidence="2">
    <location>
        <begin position="155"/>
        <end position="195"/>
    </location>
</feature>
<feature type="compositionally biased region" description="Basic residues" evidence="2">
    <location>
        <begin position="17"/>
        <end position="29"/>
    </location>
</feature>
<feature type="compositionally biased region" description="Low complexity" evidence="2">
    <location>
        <begin position="33"/>
        <end position="44"/>
    </location>
</feature>
<feature type="compositionally biased region" description="Low complexity" evidence="2">
    <location>
        <begin position="66"/>
        <end position="81"/>
    </location>
</feature>
<feature type="compositionally biased region" description="Basic and acidic residues" evidence="2">
    <location>
        <begin position="176"/>
        <end position="195"/>
    </location>
</feature>
<feature type="non-consecutive residues" evidence="3">
    <location>
        <begin position="102"/>
        <end position="103"/>
    </location>
</feature>
<feature type="non-terminal residue">
    <location>
        <position position="1"/>
    </location>
</feature>
<feature type="non-terminal residue">
    <location>
        <position position="195"/>
    </location>
</feature>
<organism>
    <name type="scientific">Drosophila dasycnemia</name>
    <name type="common">Fruit fly</name>
    <dbReference type="NCBI Taxonomy" id="58308"/>
    <lineage>
        <taxon>Eukaryota</taxon>
        <taxon>Metazoa</taxon>
        <taxon>Ecdysozoa</taxon>
        <taxon>Arthropoda</taxon>
        <taxon>Hexapoda</taxon>
        <taxon>Insecta</taxon>
        <taxon>Pterygota</taxon>
        <taxon>Neoptera</taxon>
        <taxon>Endopterygota</taxon>
        <taxon>Diptera</taxon>
        <taxon>Brachycera</taxon>
        <taxon>Muscomorpha</taxon>
        <taxon>Ephydroidea</taxon>
        <taxon>Drosophilidae</taxon>
        <taxon>Drosophila</taxon>
        <taxon>Hawaiian Drosophila</taxon>
        <taxon>split tarsi subgroup</taxon>
    </lineage>
</organism>